<dbReference type="EC" id="6.3.2.1" evidence="1"/>
<dbReference type="EMBL" id="CP000030">
    <property type="protein sequence ID" value="AAV86947.1"/>
    <property type="status" value="ALT_INIT"/>
    <property type="molecule type" value="Genomic_DNA"/>
</dbReference>
<dbReference type="SMR" id="Q5P9T3"/>
<dbReference type="KEGG" id="ama:AM1089"/>
<dbReference type="HOGENOM" id="CLU_047148_0_0_5"/>
<dbReference type="UniPathway" id="UPA00028">
    <property type="reaction ID" value="UER00005"/>
</dbReference>
<dbReference type="GO" id="GO:0005829">
    <property type="term" value="C:cytosol"/>
    <property type="evidence" value="ECO:0007669"/>
    <property type="project" value="TreeGrafter"/>
</dbReference>
<dbReference type="GO" id="GO:0005524">
    <property type="term" value="F:ATP binding"/>
    <property type="evidence" value="ECO:0007669"/>
    <property type="project" value="UniProtKB-KW"/>
</dbReference>
<dbReference type="GO" id="GO:0004592">
    <property type="term" value="F:pantoate-beta-alanine ligase activity"/>
    <property type="evidence" value="ECO:0007669"/>
    <property type="project" value="UniProtKB-UniRule"/>
</dbReference>
<dbReference type="GO" id="GO:0015940">
    <property type="term" value="P:pantothenate biosynthetic process"/>
    <property type="evidence" value="ECO:0007669"/>
    <property type="project" value="UniProtKB-UniRule"/>
</dbReference>
<dbReference type="Gene3D" id="3.40.50.620">
    <property type="entry name" value="HUPs"/>
    <property type="match status" value="1"/>
</dbReference>
<dbReference type="Gene3D" id="3.30.1300.10">
    <property type="entry name" value="Pantoate-beta-alanine ligase, C-terminal domain"/>
    <property type="match status" value="1"/>
</dbReference>
<dbReference type="HAMAP" id="MF_00158">
    <property type="entry name" value="PanC"/>
    <property type="match status" value="1"/>
</dbReference>
<dbReference type="InterPro" id="IPR004821">
    <property type="entry name" value="Cyt_trans-like"/>
</dbReference>
<dbReference type="InterPro" id="IPR003721">
    <property type="entry name" value="Pantoate_ligase"/>
</dbReference>
<dbReference type="InterPro" id="IPR042176">
    <property type="entry name" value="Pantoate_ligase_C"/>
</dbReference>
<dbReference type="InterPro" id="IPR014729">
    <property type="entry name" value="Rossmann-like_a/b/a_fold"/>
</dbReference>
<dbReference type="NCBIfam" id="TIGR00125">
    <property type="entry name" value="cyt_tran_rel"/>
    <property type="match status" value="1"/>
</dbReference>
<dbReference type="NCBIfam" id="TIGR00018">
    <property type="entry name" value="panC"/>
    <property type="match status" value="1"/>
</dbReference>
<dbReference type="PANTHER" id="PTHR21299">
    <property type="entry name" value="CYTIDYLATE KINASE/PANTOATE-BETA-ALANINE LIGASE"/>
    <property type="match status" value="1"/>
</dbReference>
<dbReference type="PANTHER" id="PTHR21299:SF1">
    <property type="entry name" value="PANTOATE--BETA-ALANINE LIGASE"/>
    <property type="match status" value="1"/>
</dbReference>
<dbReference type="Pfam" id="PF02569">
    <property type="entry name" value="Pantoate_ligase"/>
    <property type="match status" value="1"/>
</dbReference>
<dbReference type="SUPFAM" id="SSF52374">
    <property type="entry name" value="Nucleotidylyl transferase"/>
    <property type="match status" value="1"/>
</dbReference>
<comment type="function">
    <text evidence="1">Catalyzes the condensation of pantoate with beta-alanine in an ATP-dependent reaction via a pantoyl-adenylate intermediate.</text>
</comment>
<comment type="catalytic activity">
    <reaction evidence="1">
        <text>(R)-pantoate + beta-alanine + ATP = (R)-pantothenate + AMP + diphosphate + H(+)</text>
        <dbReference type="Rhea" id="RHEA:10912"/>
        <dbReference type="ChEBI" id="CHEBI:15378"/>
        <dbReference type="ChEBI" id="CHEBI:15980"/>
        <dbReference type="ChEBI" id="CHEBI:29032"/>
        <dbReference type="ChEBI" id="CHEBI:30616"/>
        <dbReference type="ChEBI" id="CHEBI:33019"/>
        <dbReference type="ChEBI" id="CHEBI:57966"/>
        <dbReference type="ChEBI" id="CHEBI:456215"/>
        <dbReference type="EC" id="6.3.2.1"/>
    </reaction>
</comment>
<comment type="pathway">
    <text evidence="1">Cofactor biosynthesis; (R)-pantothenate biosynthesis; (R)-pantothenate from (R)-pantoate and beta-alanine: step 1/1.</text>
</comment>
<comment type="subunit">
    <text evidence="1">Homodimer.</text>
</comment>
<comment type="subcellular location">
    <subcellularLocation>
        <location evidence="1">Cytoplasm</location>
    </subcellularLocation>
</comment>
<comment type="miscellaneous">
    <text evidence="1">The reaction proceeds by a bi uni uni bi ping pong mechanism.</text>
</comment>
<comment type="similarity">
    <text evidence="1">Belongs to the pantothenate synthetase family.</text>
</comment>
<comment type="sequence caution" evidence="2">
    <conflict type="erroneous initiation">
        <sequence resource="EMBL-CDS" id="AAV86947"/>
    </conflict>
</comment>
<feature type="chain" id="PRO_0000305391" description="Pantothenate synthetase">
    <location>
        <begin position="1"/>
        <end position="277"/>
    </location>
</feature>
<feature type="active site" description="Proton donor" evidence="1">
    <location>
        <position position="35"/>
    </location>
</feature>
<feature type="binding site" evidence="1">
    <location>
        <begin position="28"/>
        <end position="35"/>
    </location>
    <ligand>
        <name>ATP</name>
        <dbReference type="ChEBI" id="CHEBI:30616"/>
    </ligand>
</feature>
<feature type="binding site" evidence="1">
    <location>
        <position position="59"/>
    </location>
    <ligand>
        <name>(R)-pantoate</name>
        <dbReference type="ChEBI" id="CHEBI:15980"/>
    </ligand>
</feature>
<feature type="binding site" evidence="1">
    <location>
        <position position="59"/>
    </location>
    <ligand>
        <name>beta-alanine</name>
        <dbReference type="ChEBI" id="CHEBI:57966"/>
    </ligand>
</feature>
<feature type="binding site" evidence="1">
    <location>
        <begin position="145"/>
        <end position="148"/>
    </location>
    <ligand>
        <name>ATP</name>
        <dbReference type="ChEBI" id="CHEBI:30616"/>
    </ligand>
</feature>
<feature type="binding site" evidence="1">
    <location>
        <position position="174"/>
    </location>
    <ligand>
        <name>ATP</name>
        <dbReference type="ChEBI" id="CHEBI:30616"/>
    </ligand>
</feature>
<feature type="binding site" evidence="1">
    <location>
        <begin position="182"/>
        <end position="185"/>
    </location>
    <ligand>
        <name>ATP</name>
        <dbReference type="ChEBI" id="CHEBI:30616"/>
    </ligand>
</feature>
<organism>
    <name type="scientific">Anaplasma marginale (strain St. Maries)</name>
    <dbReference type="NCBI Taxonomy" id="234826"/>
    <lineage>
        <taxon>Bacteria</taxon>
        <taxon>Pseudomonadati</taxon>
        <taxon>Pseudomonadota</taxon>
        <taxon>Alphaproteobacteria</taxon>
        <taxon>Rickettsiales</taxon>
        <taxon>Anaplasmataceae</taxon>
        <taxon>Anaplasma</taxon>
    </lineage>
</organism>
<proteinExistence type="inferred from homology"/>
<protein>
    <recommendedName>
        <fullName evidence="1">Pantothenate synthetase</fullName>
        <shortName evidence="1">PS</shortName>
        <ecNumber evidence="1">6.3.2.1</ecNumber>
    </recommendedName>
    <alternativeName>
        <fullName evidence="1">Pantoate--beta-alanine ligase</fullName>
    </alternativeName>
    <alternativeName>
        <fullName evidence="1">Pantoate-activating enzyme</fullName>
    </alternativeName>
</protein>
<gene>
    <name evidence="1" type="primary">panC</name>
    <name type="ordered locus">AM1089</name>
</gene>
<reference key="1">
    <citation type="journal article" date="2005" name="Proc. Natl. Acad. Sci. U.S.A.">
        <title>Complete genome sequencing of Anaplasma marginale reveals that the surface is skewed to two superfamilies of outer membrane proteins.</title>
        <authorList>
            <person name="Brayton K.A."/>
            <person name="Kappmeyer L.S."/>
            <person name="Herndon D.R."/>
            <person name="Dark M.J."/>
            <person name="Tibbals D.L."/>
            <person name="Palmer G.H."/>
            <person name="McGuire T.C."/>
            <person name="Knowles D.P. Jr."/>
        </authorList>
    </citation>
    <scope>NUCLEOTIDE SEQUENCE [LARGE SCALE GENOMIC DNA]</scope>
    <source>
        <strain>St. Maries</strain>
    </source>
</reference>
<keyword id="KW-0067">ATP-binding</keyword>
<keyword id="KW-0963">Cytoplasm</keyword>
<keyword id="KW-0436">Ligase</keyword>
<keyword id="KW-0547">Nucleotide-binding</keyword>
<keyword id="KW-0566">Pantothenate biosynthesis</keyword>
<evidence type="ECO:0000255" key="1">
    <source>
        <dbReference type="HAMAP-Rule" id="MF_00158"/>
    </source>
</evidence>
<evidence type="ECO:0000305" key="2"/>
<name>PANC_ANAMM</name>
<sequence length="277" mass="31057">MEIVRDVESVRAVLRPFTNRKIGLVPTMGALHSGHLSLVHEMKKHADVVIVSIFVNPLQFSPGEDYEKYPRCEEVDCEKCASAGVDVVYIPSAEGMYPDGFSTSVDIGPMARELCGASRQNFINGIMVVLIKLVMQTNAHCMILGEKDYQMLHLTRQLFRDLNIGVDVLQGNTVRSAEGLALSSRHQYLSSAEITKANFLYGFLLEVGQQLSDDPHGQQEIIARGKLRLEQEGFEVDYLEVRDNNTLEHMQTFRKPARVFLAVYLGNCRLIDNVLLA</sequence>
<accession>Q5P9T3</accession>